<feature type="chain" id="PRO_0000307974" description="Large ribosomal subunit protein uL1">
    <location>
        <begin position="1"/>
        <end position="232"/>
    </location>
</feature>
<dbReference type="EMBL" id="CP000546">
    <property type="protein sequence ID" value="ABN01398.1"/>
    <property type="molecule type" value="Genomic_DNA"/>
</dbReference>
<dbReference type="RefSeq" id="WP_004185135.1">
    <property type="nucleotide sequence ID" value="NC_008836.1"/>
</dbReference>
<dbReference type="SMR" id="A2S7G3"/>
<dbReference type="GeneID" id="93061844"/>
<dbReference type="KEGG" id="bml:BMA10229_A1911"/>
<dbReference type="HOGENOM" id="CLU_062853_0_0_4"/>
<dbReference type="Proteomes" id="UP000002283">
    <property type="component" value="Chromosome I"/>
</dbReference>
<dbReference type="GO" id="GO:0022625">
    <property type="term" value="C:cytosolic large ribosomal subunit"/>
    <property type="evidence" value="ECO:0007669"/>
    <property type="project" value="TreeGrafter"/>
</dbReference>
<dbReference type="GO" id="GO:0019843">
    <property type="term" value="F:rRNA binding"/>
    <property type="evidence" value="ECO:0007669"/>
    <property type="project" value="UniProtKB-UniRule"/>
</dbReference>
<dbReference type="GO" id="GO:0003735">
    <property type="term" value="F:structural constituent of ribosome"/>
    <property type="evidence" value="ECO:0007669"/>
    <property type="project" value="InterPro"/>
</dbReference>
<dbReference type="GO" id="GO:0000049">
    <property type="term" value="F:tRNA binding"/>
    <property type="evidence" value="ECO:0007669"/>
    <property type="project" value="UniProtKB-KW"/>
</dbReference>
<dbReference type="GO" id="GO:0006417">
    <property type="term" value="P:regulation of translation"/>
    <property type="evidence" value="ECO:0007669"/>
    <property type="project" value="UniProtKB-KW"/>
</dbReference>
<dbReference type="GO" id="GO:0006412">
    <property type="term" value="P:translation"/>
    <property type="evidence" value="ECO:0007669"/>
    <property type="project" value="UniProtKB-UniRule"/>
</dbReference>
<dbReference type="CDD" id="cd00403">
    <property type="entry name" value="Ribosomal_L1"/>
    <property type="match status" value="1"/>
</dbReference>
<dbReference type="FunFam" id="3.40.50.790:FF:000001">
    <property type="entry name" value="50S ribosomal protein L1"/>
    <property type="match status" value="1"/>
</dbReference>
<dbReference type="Gene3D" id="3.30.190.20">
    <property type="match status" value="1"/>
</dbReference>
<dbReference type="Gene3D" id="3.40.50.790">
    <property type="match status" value="1"/>
</dbReference>
<dbReference type="HAMAP" id="MF_01318_B">
    <property type="entry name" value="Ribosomal_uL1_B"/>
    <property type="match status" value="1"/>
</dbReference>
<dbReference type="InterPro" id="IPR005878">
    <property type="entry name" value="Ribosom_uL1_bac-type"/>
</dbReference>
<dbReference type="InterPro" id="IPR002143">
    <property type="entry name" value="Ribosomal_uL1"/>
</dbReference>
<dbReference type="InterPro" id="IPR023674">
    <property type="entry name" value="Ribosomal_uL1-like"/>
</dbReference>
<dbReference type="InterPro" id="IPR028364">
    <property type="entry name" value="Ribosomal_uL1/biogenesis"/>
</dbReference>
<dbReference type="InterPro" id="IPR016095">
    <property type="entry name" value="Ribosomal_uL1_3-a/b-sand"/>
</dbReference>
<dbReference type="InterPro" id="IPR023673">
    <property type="entry name" value="Ribosomal_uL1_CS"/>
</dbReference>
<dbReference type="NCBIfam" id="TIGR01169">
    <property type="entry name" value="rplA_bact"/>
    <property type="match status" value="1"/>
</dbReference>
<dbReference type="PANTHER" id="PTHR36427">
    <property type="entry name" value="54S RIBOSOMAL PROTEIN L1, MITOCHONDRIAL"/>
    <property type="match status" value="1"/>
</dbReference>
<dbReference type="PANTHER" id="PTHR36427:SF3">
    <property type="entry name" value="LARGE RIBOSOMAL SUBUNIT PROTEIN UL1M"/>
    <property type="match status" value="1"/>
</dbReference>
<dbReference type="Pfam" id="PF00687">
    <property type="entry name" value="Ribosomal_L1"/>
    <property type="match status" value="1"/>
</dbReference>
<dbReference type="PIRSF" id="PIRSF002155">
    <property type="entry name" value="Ribosomal_L1"/>
    <property type="match status" value="1"/>
</dbReference>
<dbReference type="SUPFAM" id="SSF56808">
    <property type="entry name" value="Ribosomal protein L1"/>
    <property type="match status" value="1"/>
</dbReference>
<dbReference type="PROSITE" id="PS01199">
    <property type="entry name" value="RIBOSOMAL_L1"/>
    <property type="match status" value="1"/>
</dbReference>
<accession>A2S7G3</accession>
<proteinExistence type="inferred from homology"/>
<name>RL1_BURM9</name>
<keyword id="KW-0678">Repressor</keyword>
<keyword id="KW-0687">Ribonucleoprotein</keyword>
<keyword id="KW-0689">Ribosomal protein</keyword>
<keyword id="KW-0694">RNA-binding</keyword>
<keyword id="KW-0699">rRNA-binding</keyword>
<keyword id="KW-0810">Translation regulation</keyword>
<keyword id="KW-0820">tRNA-binding</keyword>
<comment type="function">
    <text evidence="1">Binds directly to 23S rRNA. The L1 stalk is quite mobile in the ribosome, and is involved in E site tRNA release.</text>
</comment>
<comment type="function">
    <text evidence="1">Protein L1 is also a translational repressor protein, it controls the translation of the L11 operon by binding to its mRNA.</text>
</comment>
<comment type="subunit">
    <text evidence="1">Part of the 50S ribosomal subunit.</text>
</comment>
<comment type="similarity">
    <text evidence="1">Belongs to the universal ribosomal protein uL1 family.</text>
</comment>
<organism>
    <name type="scientific">Burkholderia mallei (strain NCTC 10229)</name>
    <dbReference type="NCBI Taxonomy" id="412022"/>
    <lineage>
        <taxon>Bacteria</taxon>
        <taxon>Pseudomonadati</taxon>
        <taxon>Pseudomonadota</taxon>
        <taxon>Betaproteobacteria</taxon>
        <taxon>Burkholderiales</taxon>
        <taxon>Burkholderiaceae</taxon>
        <taxon>Burkholderia</taxon>
        <taxon>pseudomallei group</taxon>
    </lineage>
</organism>
<gene>
    <name evidence="1" type="primary">rplA</name>
    <name type="ordered locus">BMA10229_A1911</name>
</gene>
<sequence>MAKISKRRQAFAAKVDRQKLYPIDDALALVKECASAKFDESIDVAVQLGIDAKKSDQVVRGSVVLPAGTGKSVRVAVFAQGEKAEQARAAGAEVVGMEDLAEQIKAGQMDFDIVIASPDTMRIVGTLGQILGPRGLMPNPKVGTVTPDVATAVKNAKAGQVQFRVDKAGIIHATIGRASFEPTALRTNLSALIEALQKAKPATSKGVYLRKIALSSTMGVGVRVDQGSLAAQ</sequence>
<reference key="1">
    <citation type="journal article" date="2010" name="Genome Biol. Evol.">
        <title>Continuing evolution of Burkholderia mallei through genome reduction and large-scale rearrangements.</title>
        <authorList>
            <person name="Losada L."/>
            <person name="Ronning C.M."/>
            <person name="DeShazer D."/>
            <person name="Woods D."/>
            <person name="Fedorova N."/>
            <person name="Kim H.S."/>
            <person name="Shabalina S.A."/>
            <person name="Pearson T.R."/>
            <person name="Brinkac L."/>
            <person name="Tan P."/>
            <person name="Nandi T."/>
            <person name="Crabtree J."/>
            <person name="Badger J."/>
            <person name="Beckstrom-Sternberg S."/>
            <person name="Saqib M."/>
            <person name="Schutzer S.E."/>
            <person name="Keim P."/>
            <person name="Nierman W.C."/>
        </authorList>
    </citation>
    <scope>NUCLEOTIDE SEQUENCE [LARGE SCALE GENOMIC DNA]</scope>
    <source>
        <strain>NCTC 10229</strain>
    </source>
</reference>
<evidence type="ECO:0000255" key="1">
    <source>
        <dbReference type="HAMAP-Rule" id="MF_01318"/>
    </source>
</evidence>
<evidence type="ECO:0000305" key="2"/>
<protein>
    <recommendedName>
        <fullName evidence="1">Large ribosomal subunit protein uL1</fullName>
    </recommendedName>
    <alternativeName>
        <fullName evidence="2">50S ribosomal protein L1</fullName>
    </alternativeName>
</protein>